<organism>
    <name type="scientific">Variola virus (isolate Human/India/Ind3/1967)</name>
    <name type="common">VARV</name>
    <name type="synonym">Smallpox virus</name>
    <dbReference type="NCBI Taxonomy" id="587200"/>
    <lineage>
        <taxon>Viruses</taxon>
        <taxon>Varidnaviria</taxon>
        <taxon>Bamfordvirae</taxon>
        <taxon>Nucleocytoviricota</taxon>
        <taxon>Pokkesviricetes</taxon>
        <taxon>Chitovirales</taxon>
        <taxon>Poxviridae</taxon>
        <taxon>Chordopoxvirinae</taxon>
        <taxon>Orthopoxvirus</taxon>
        <taxon>Variola virus</taxon>
    </lineage>
</organism>
<dbReference type="EMBL" id="X69198">
    <property type="protein sequence ID" value="CAA49094.1"/>
    <property type="molecule type" value="Genomic_DNA"/>
</dbReference>
<dbReference type="PIR" id="C36853">
    <property type="entry name" value="C36853"/>
</dbReference>
<dbReference type="RefSeq" id="NP_042197.1">
    <property type="nucleotide sequence ID" value="NC_001611.1"/>
</dbReference>
<dbReference type="SMR" id="P0DSW5"/>
<dbReference type="GeneID" id="1486528"/>
<dbReference type="KEGG" id="vg:1486528"/>
<dbReference type="Proteomes" id="UP000002060">
    <property type="component" value="Segment"/>
</dbReference>
<dbReference type="GO" id="GO:0043657">
    <property type="term" value="C:host cell"/>
    <property type="evidence" value="ECO:0007669"/>
    <property type="project" value="GOC"/>
</dbReference>
<dbReference type="GO" id="GO:0030430">
    <property type="term" value="C:host cell cytoplasm"/>
    <property type="evidence" value="ECO:0007669"/>
    <property type="project" value="UniProtKB-SubCell"/>
</dbReference>
<dbReference type="GO" id="GO:0003779">
    <property type="term" value="F:actin binding"/>
    <property type="evidence" value="ECO:0007669"/>
    <property type="project" value="UniProtKB-KW"/>
</dbReference>
<dbReference type="GO" id="GO:0039680">
    <property type="term" value="P:actin-dependent intracellular transport of virus towards nucleus"/>
    <property type="evidence" value="ECO:0007669"/>
    <property type="project" value="UniProtKB-KW"/>
</dbReference>
<dbReference type="GO" id="GO:0046718">
    <property type="term" value="P:symbiont entry into host cell"/>
    <property type="evidence" value="ECO:0007669"/>
    <property type="project" value="UniProtKB-KW"/>
</dbReference>
<dbReference type="Gene3D" id="3.30.450.30">
    <property type="entry name" value="Dynein light chain 2a, cytoplasmic"/>
    <property type="match status" value="1"/>
</dbReference>
<dbReference type="InterPro" id="IPR048278">
    <property type="entry name" value="PFN"/>
</dbReference>
<dbReference type="InterPro" id="IPR005455">
    <property type="entry name" value="PFN_euk"/>
</dbReference>
<dbReference type="InterPro" id="IPR036140">
    <property type="entry name" value="PFN_sf"/>
</dbReference>
<dbReference type="InterPro" id="IPR027310">
    <property type="entry name" value="Profilin_CS"/>
</dbReference>
<dbReference type="Pfam" id="PF00235">
    <property type="entry name" value="Profilin"/>
    <property type="match status" value="1"/>
</dbReference>
<dbReference type="SMART" id="SM00392">
    <property type="entry name" value="PROF"/>
    <property type="match status" value="1"/>
</dbReference>
<dbReference type="SUPFAM" id="SSF55770">
    <property type="entry name" value="Profilin (actin-binding protein)"/>
    <property type="match status" value="1"/>
</dbReference>
<dbReference type="PROSITE" id="PS00414">
    <property type="entry name" value="PROFILIN"/>
    <property type="match status" value="1"/>
</dbReference>
<comment type="function">
    <text evidence="1">Participates in either intracellular transport of viral proteins or intercellular spread of the virus. Cellular profilins modulate actin filament dynamics (polymerization and depolymerization) via direct binding to actin through an actin-binding domain as well as by modulation of other actin-binding proteins. In contrast to cellular homologs, the poxvirus profilins seem to bind actin only weakly (By similarity).</text>
</comment>
<comment type="subunit">
    <text evidence="1">Interacts with host TPM1. Interacts with protein A25 (By similarity).</text>
</comment>
<comment type="subcellular location">
    <subcellularLocation>
        <location>Host cytoplasm</location>
    </subcellularLocation>
    <text>Localizes to inclusion bodies formed by viral A25/ATI protein in the cytoplasm of the host cell.</text>
</comment>
<comment type="similarity">
    <text evidence="2">Belongs to the profilin family.</text>
</comment>
<name>PROF_VAR67</name>
<protein>
    <recommendedName>
        <fullName>Profilin</fullName>
    </recommendedName>
</protein>
<sequence>MAEWHKIIEDISKNNNFEDAAIVDYKTTKNVLAAIPNRTFAKINPGEVIPLITNHNILKPLIGQKFCIVYTNSLMDENTYAMELLTGYAPVSPIVIARTHTALIFLMGKPTTSRRDVYRTCRDHATRVRATGN</sequence>
<feature type="chain" id="PRO_0000199684" description="Profilin">
    <location>
        <begin position="1"/>
        <end position="133"/>
    </location>
</feature>
<evidence type="ECO:0000250" key="1"/>
<evidence type="ECO:0000305" key="2"/>
<proteinExistence type="inferred from homology"/>
<organismHost>
    <name type="scientific">Homo sapiens</name>
    <name type="common">Human</name>
    <dbReference type="NCBI Taxonomy" id="9606"/>
</organismHost>
<accession>P0DSW5</accession>
<accession>P33828</accession>
<accession>Q76PV8</accession>
<reference key="1">
    <citation type="journal article" date="1993" name="FEBS Lett.">
        <title>Genes of variola and vaccinia viruses necessary to overcome the host protective mechanisms.</title>
        <authorList>
            <person name="Shchelkunov S.N."/>
            <person name="Blinov V.M."/>
            <person name="Sandakhchiev L.S."/>
        </authorList>
    </citation>
    <scope>NUCLEOTIDE SEQUENCE [GENOMIC DNA]</scope>
</reference>
<gene>
    <name type="primary">OPG171</name>
    <name type="ORF">A42R</name>
    <name type="ORF">A45R</name>
    <name type="ORF">A47R</name>
    <name type="ORF">A50R</name>
</gene>
<keyword id="KW-0009">Actin-binding</keyword>
<keyword id="KW-1178">Actin-dependent inwards viral transport</keyword>
<keyword id="KW-1176">Cytoplasmic inwards viral transport</keyword>
<keyword id="KW-1035">Host cytoplasm</keyword>
<keyword id="KW-0945">Host-virus interaction</keyword>
<keyword id="KW-1185">Reference proteome</keyword>
<keyword id="KW-1160">Virus entry into host cell</keyword>